<reference key="1">
    <citation type="journal article" date="2005" name="J. Bacteriol.">
        <title>Insights on evolution of virulence and resistance from the complete genome analysis of an early methicillin-resistant Staphylococcus aureus strain and a biofilm-producing methicillin-resistant Staphylococcus epidermidis strain.</title>
        <authorList>
            <person name="Gill S.R."/>
            <person name="Fouts D.E."/>
            <person name="Archer G.L."/>
            <person name="Mongodin E.F."/>
            <person name="DeBoy R.T."/>
            <person name="Ravel J."/>
            <person name="Paulsen I.T."/>
            <person name="Kolonay J.F."/>
            <person name="Brinkac L.M."/>
            <person name="Beanan M.J."/>
            <person name="Dodson R.J."/>
            <person name="Daugherty S.C."/>
            <person name="Madupu R."/>
            <person name="Angiuoli S.V."/>
            <person name="Durkin A.S."/>
            <person name="Haft D.H."/>
            <person name="Vamathevan J.J."/>
            <person name="Khouri H."/>
            <person name="Utterback T.R."/>
            <person name="Lee C."/>
            <person name="Dimitrov G."/>
            <person name="Jiang L."/>
            <person name="Qin H."/>
            <person name="Weidman J."/>
            <person name="Tran K."/>
            <person name="Kang K.H."/>
            <person name="Hance I.R."/>
            <person name="Nelson K.E."/>
            <person name="Fraser C.M."/>
        </authorList>
    </citation>
    <scope>NUCLEOTIDE SEQUENCE [LARGE SCALE GENOMIC DNA]</scope>
    <source>
        <strain>ATCC 35984 / DSM 28319 / BCRC 17069 / CCUG 31568 / BM 3577 / RP62A</strain>
    </source>
</reference>
<feature type="chain" id="PRO_0000372160" description="Na(+)/H(+) antiporter subunit F1">
    <location>
        <begin position="1"/>
        <end position="97"/>
    </location>
</feature>
<feature type="transmembrane region" description="Helical" evidence="2">
    <location>
        <begin position="3"/>
        <end position="23"/>
    </location>
</feature>
<feature type="transmembrane region" description="Helical" evidence="2">
    <location>
        <begin position="35"/>
        <end position="55"/>
    </location>
</feature>
<feature type="transmembrane region" description="Helical" evidence="2">
    <location>
        <begin position="60"/>
        <end position="80"/>
    </location>
</feature>
<accession>Q5HQL5</accession>
<organism>
    <name type="scientific">Staphylococcus epidermidis (strain ATCC 35984 / DSM 28319 / BCRC 17069 / CCUG 31568 / BM 3577 / RP62A)</name>
    <dbReference type="NCBI Taxonomy" id="176279"/>
    <lineage>
        <taxon>Bacteria</taxon>
        <taxon>Bacillati</taxon>
        <taxon>Bacillota</taxon>
        <taxon>Bacilli</taxon>
        <taxon>Bacillales</taxon>
        <taxon>Staphylococcaceae</taxon>
        <taxon>Staphylococcus</taxon>
    </lineage>
</organism>
<evidence type="ECO:0000250" key="1"/>
<evidence type="ECO:0000255" key="2"/>
<evidence type="ECO:0000305" key="3"/>
<protein>
    <recommendedName>
        <fullName>Na(+)/H(+) antiporter subunit F1</fullName>
    </recommendedName>
    <alternativeName>
        <fullName>Mnh complex subunit F1</fullName>
    </alternativeName>
</protein>
<keyword id="KW-0050">Antiport</keyword>
<keyword id="KW-1003">Cell membrane</keyword>
<keyword id="KW-0375">Hydrogen ion transport</keyword>
<keyword id="KW-0406">Ion transport</keyword>
<keyword id="KW-0472">Membrane</keyword>
<keyword id="KW-1185">Reference proteome</keyword>
<keyword id="KW-0915">Sodium</keyword>
<keyword id="KW-0739">Sodium transport</keyword>
<keyword id="KW-0812">Transmembrane</keyword>
<keyword id="KW-1133">Transmembrane helix</keyword>
<keyword id="KW-0813">Transport</keyword>
<dbReference type="EMBL" id="CP000029">
    <property type="protein sequence ID" value="AAW53929.1"/>
    <property type="molecule type" value="Genomic_DNA"/>
</dbReference>
<dbReference type="RefSeq" id="WP_001831940.1">
    <property type="nucleotide sequence ID" value="NC_002976.3"/>
</dbReference>
<dbReference type="SMR" id="Q5HQL5"/>
<dbReference type="STRING" id="176279.SERP0533"/>
<dbReference type="GeneID" id="50019212"/>
<dbReference type="KEGG" id="ser:SERP0533"/>
<dbReference type="eggNOG" id="COG2212">
    <property type="taxonomic scope" value="Bacteria"/>
</dbReference>
<dbReference type="HOGENOM" id="CLU_125825_1_3_9"/>
<dbReference type="Proteomes" id="UP000000531">
    <property type="component" value="Chromosome"/>
</dbReference>
<dbReference type="GO" id="GO:0005886">
    <property type="term" value="C:plasma membrane"/>
    <property type="evidence" value="ECO:0007669"/>
    <property type="project" value="UniProtKB-SubCell"/>
</dbReference>
<dbReference type="GO" id="GO:0015385">
    <property type="term" value="F:sodium:proton antiporter activity"/>
    <property type="evidence" value="ECO:0007669"/>
    <property type="project" value="TreeGrafter"/>
</dbReference>
<dbReference type="InterPro" id="IPR007208">
    <property type="entry name" value="MrpF/PhaF-like"/>
</dbReference>
<dbReference type="NCBIfam" id="NF009248">
    <property type="entry name" value="PRK12600.1"/>
    <property type="match status" value="1"/>
</dbReference>
<dbReference type="PANTHER" id="PTHR34702">
    <property type="entry name" value="NA(+)/H(+) ANTIPORTER SUBUNIT F1"/>
    <property type="match status" value="1"/>
</dbReference>
<dbReference type="PANTHER" id="PTHR34702:SF1">
    <property type="entry name" value="NA(+)_H(+) ANTIPORTER SUBUNIT F"/>
    <property type="match status" value="1"/>
</dbReference>
<dbReference type="Pfam" id="PF04066">
    <property type="entry name" value="MrpF_PhaF"/>
    <property type="match status" value="1"/>
</dbReference>
<dbReference type="PIRSF" id="PIRSF028784">
    <property type="entry name" value="MrpF"/>
    <property type="match status" value="1"/>
</dbReference>
<name>MNHF1_STAEQ</name>
<proteinExistence type="inferred from homology"/>
<comment type="function">
    <text evidence="1">Mnh complex is a Na(+)/H(+) antiporter involved in Na(+) excretion.</text>
</comment>
<comment type="subunit">
    <text evidence="1">May form a heterooligomeric complex that consists of seven subunits: mnhA1, mnhB1, mnhC1, mnhD1, mnhE1, mnhF1 and mnhG1.</text>
</comment>
<comment type="subcellular location">
    <subcellularLocation>
        <location evidence="3">Cell membrane</location>
        <topology evidence="3">Multi-pass membrane protein</topology>
    </subcellularLocation>
</comment>
<comment type="similarity">
    <text evidence="3">Belongs to the CPA3 antiporters (TC 2.A.63) subunit F family.</text>
</comment>
<gene>
    <name type="primary">mnhF1</name>
    <name type="ordered locus">SERP0533</name>
</gene>
<sequence>MPFKIFIITALIIVVLSMLAMLIRVILGPSLADRVVALDAIGLQLMAVIALFSILLNIKYMLVVILMVGILAFLGTAVFSKFMDEGKVIKHDSNDRH</sequence>